<feature type="chain" id="PRO_1000012902" description="Lysine--tRNA ligase">
    <location>
        <begin position="1"/>
        <end position="512"/>
    </location>
</feature>
<feature type="binding site" evidence="1">
    <location>
        <position position="408"/>
    </location>
    <ligand>
        <name>Mg(2+)</name>
        <dbReference type="ChEBI" id="CHEBI:18420"/>
        <label>1</label>
    </ligand>
</feature>
<feature type="binding site" evidence="1">
    <location>
        <position position="415"/>
    </location>
    <ligand>
        <name>Mg(2+)</name>
        <dbReference type="ChEBI" id="CHEBI:18420"/>
        <label>1</label>
    </ligand>
</feature>
<feature type="binding site" evidence="1">
    <location>
        <position position="415"/>
    </location>
    <ligand>
        <name>Mg(2+)</name>
        <dbReference type="ChEBI" id="CHEBI:18420"/>
        <label>2</label>
    </ligand>
</feature>
<accession>A3PFA8</accession>
<organism>
    <name type="scientific">Prochlorococcus marinus (strain MIT 9301)</name>
    <dbReference type="NCBI Taxonomy" id="167546"/>
    <lineage>
        <taxon>Bacteria</taxon>
        <taxon>Bacillati</taxon>
        <taxon>Cyanobacteriota</taxon>
        <taxon>Cyanophyceae</taxon>
        <taxon>Synechococcales</taxon>
        <taxon>Prochlorococcaceae</taxon>
        <taxon>Prochlorococcus</taxon>
    </lineage>
</organism>
<evidence type="ECO:0000255" key="1">
    <source>
        <dbReference type="HAMAP-Rule" id="MF_00252"/>
    </source>
</evidence>
<keyword id="KW-0030">Aminoacyl-tRNA synthetase</keyword>
<keyword id="KW-0067">ATP-binding</keyword>
<keyword id="KW-0963">Cytoplasm</keyword>
<keyword id="KW-0436">Ligase</keyword>
<keyword id="KW-0460">Magnesium</keyword>
<keyword id="KW-0479">Metal-binding</keyword>
<keyword id="KW-0547">Nucleotide-binding</keyword>
<keyword id="KW-0648">Protein biosynthesis</keyword>
<keyword id="KW-1185">Reference proteome</keyword>
<name>SYK_PROM0</name>
<comment type="catalytic activity">
    <reaction evidence="1">
        <text>tRNA(Lys) + L-lysine + ATP = L-lysyl-tRNA(Lys) + AMP + diphosphate</text>
        <dbReference type="Rhea" id="RHEA:20792"/>
        <dbReference type="Rhea" id="RHEA-COMP:9696"/>
        <dbReference type="Rhea" id="RHEA-COMP:9697"/>
        <dbReference type="ChEBI" id="CHEBI:30616"/>
        <dbReference type="ChEBI" id="CHEBI:32551"/>
        <dbReference type="ChEBI" id="CHEBI:33019"/>
        <dbReference type="ChEBI" id="CHEBI:78442"/>
        <dbReference type="ChEBI" id="CHEBI:78529"/>
        <dbReference type="ChEBI" id="CHEBI:456215"/>
        <dbReference type="EC" id="6.1.1.6"/>
    </reaction>
</comment>
<comment type="cofactor">
    <cofactor evidence="1">
        <name>Mg(2+)</name>
        <dbReference type="ChEBI" id="CHEBI:18420"/>
    </cofactor>
    <text evidence="1">Binds 3 Mg(2+) ions per subunit.</text>
</comment>
<comment type="subunit">
    <text evidence="1">Homodimer.</text>
</comment>
<comment type="subcellular location">
    <subcellularLocation>
        <location evidence="1">Cytoplasm</location>
    </subcellularLocation>
</comment>
<comment type="similarity">
    <text evidence="1">Belongs to the class-II aminoacyl-tRNA synthetase family.</text>
</comment>
<protein>
    <recommendedName>
        <fullName evidence="1">Lysine--tRNA ligase</fullName>
        <ecNumber evidence="1">6.1.1.6</ecNumber>
    </recommendedName>
    <alternativeName>
        <fullName evidence="1">Lysyl-tRNA synthetase</fullName>
        <shortName evidence="1">LysRS</shortName>
    </alternativeName>
</protein>
<dbReference type="EC" id="6.1.1.6" evidence="1"/>
<dbReference type="EMBL" id="CP000576">
    <property type="protein sequence ID" value="ABO18433.1"/>
    <property type="molecule type" value="Genomic_DNA"/>
</dbReference>
<dbReference type="RefSeq" id="WP_011863718.1">
    <property type="nucleotide sequence ID" value="NC_009091.1"/>
</dbReference>
<dbReference type="SMR" id="A3PFA8"/>
<dbReference type="STRING" id="167546.P9301_18101"/>
<dbReference type="KEGG" id="pmg:P9301_18101"/>
<dbReference type="eggNOG" id="COG1190">
    <property type="taxonomic scope" value="Bacteria"/>
</dbReference>
<dbReference type="HOGENOM" id="CLU_008255_6_0_3"/>
<dbReference type="OrthoDB" id="9802326at2"/>
<dbReference type="Proteomes" id="UP000001430">
    <property type="component" value="Chromosome"/>
</dbReference>
<dbReference type="GO" id="GO:0005829">
    <property type="term" value="C:cytosol"/>
    <property type="evidence" value="ECO:0007669"/>
    <property type="project" value="TreeGrafter"/>
</dbReference>
<dbReference type="GO" id="GO:0005524">
    <property type="term" value="F:ATP binding"/>
    <property type="evidence" value="ECO:0007669"/>
    <property type="project" value="UniProtKB-UniRule"/>
</dbReference>
<dbReference type="GO" id="GO:0004824">
    <property type="term" value="F:lysine-tRNA ligase activity"/>
    <property type="evidence" value="ECO:0007669"/>
    <property type="project" value="UniProtKB-UniRule"/>
</dbReference>
<dbReference type="GO" id="GO:0000287">
    <property type="term" value="F:magnesium ion binding"/>
    <property type="evidence" value="ECO:0007669"/>
    <property type="project" value="UniProtKB-UniRule"/>
</dbReference>
<dbReference type="GO" id="GO:0000049">
    <property type="term" value="F:tRNA binding"/>
    <property type="evidence" value="ECO:0007669"/>
    <property type="project" value="TreeGrafter"/>
</dbReference>
<dbReference type="GO" id="GO:0006430">
    <property type="term" value="P:lysyl-tRNA aminoacylation"/>
    <property type="evidence" value="ECO:0007669"/>
    <property type="project" value="UniProtKB-UniRule"/>
</dbReference>
<dbReference type="CDD" id="cd00775">
    <property type="entry name" value="LysRS_core"/>
    <property type="match status" value="1"/>
</dbReference>
<dbReference type="CDD" id="cd04322">
    <property type="entry name" value="LysRS_N"/>
    <property type="match status" value="1"/>
</dbReference>
<dbReference type="FunFam" id="2.40.50.140:FF:000024">
    <property type="entry name" value="Lysine--tRNA ligase"/>
    <property type="match status" value="1"/>
</dbReference>
<dbReference type="Gene3D" id="3.30.930.10">
    <property type="entry name" value="Bira Bifunctional Protein, Domain 2"/>
    <property type="match status" value="1"/>
</dbReference>
<dbReference type="Gene3D" id="2.40.50.140">
    <property type="entry name" value="Nucleic acid-binding proteins"/>
    <property type="match status" value="1"/>
</dbReference>
<dbReference type="HAMAP" id="MF_00252">
    <property type="entry name" value="Lys_tRNA_synth_class2"/>
    <property type="match status" value="1"/>
</dbReference>
<dbReference type="InterPro" id="IPR004364">
    <property type="entry name" value="Aa-tRNA-synt_II"/>
</dbReference>
<dbReference type="InterPro" id="IPR006195">
    <property type="entry name" value="aa-tRNA-synth_II"/>
</dbReference>
<dbReference type="InterPro" id="IPR045864">
    <property type="entry name" value="aa-tRNA-synth_II/BPL/LPL"/>
</dbReference>
<dbReference type="InterPro" id="IPR002313">
    <property type="entry name" value="Lys-tRNA-ligase_II"/>
</dbReference>
<dbReference type="InterPro" id="IPR034762">
    <property type="entry name" value="Lys-tRNA-ligase_II_bac/euk"/>
</dbReference>
<dbReference type="InterPro" id="IPR044136">
    <property type="entry name" value="Lys-tRNA-ligase_II_N"/>
</dbReference>
<dbReference type="InterPro" id="IPR018149">
    <property type="entry name" value="Lys-tRNA-synth_II_C"/>
</dbReference>
<dbReference type="InterPro" id="IPR012340">
    <property type="entry name" value="NA-bd_OB-fold"/>
</dbReference>
<dbReference type="InterPro" id="IPR004365">
    <property type="entry name" value="NA-bd_OB_tRNA"/>
</dbReference>
<dbReference type="NCBIfam" id="TIGR00499">
    <property type="entry name" value="lysS_bact"/>
    <property type="match status" value="1"/>
</dbReference>
<dbReference type="NCBIfam" id="NF001756">
    <property type="entry name" value="PRK00484.1"/>
    <property type="match status" value="1"/>
</dbReference>
<dbReference type="PANTHER" id="PTHR42918:SF15">
    <property type="entry name" value="LYSINE--TRNA LIGASE, CHLOROPLASTIC_MITOCHONDRIAL"/>
    <property type="match status" value="1"/>
</dbReference>
<dbReference type="PANTHER" id="PTHR42918">
    <property type="entry name" value="LYSYL-TRNA SYNTHETASE"/>
    <property type="match status" value="1"/>
</dbReference>
<dbReference type="Pfam" id="PF00152">
    <property type="entry name" value="tRNA-synt_2"/>
    <property type="match status" value="1"/>
</dbReference>
<dbReference type="Pfam" id="PF01336">
    <property type="entry name" value="tRNA_anti-codon"/>
    <property type="match status" value="1"/>
</dbReference>
<dbReference type="PIRSF" id="PIRSF039101">
    <property type="entry name" value="LysRS2"/>
    <property type="match status" value="1"/>
</dbReference>
<dbReference type="PRINTS" id="PR00982">
    <property type="entry name" value="TRNASYNTHLYS"/>
</dbReference>
<dbReference type="SUPFAM" id="SSF55681">
    <property type="entry name" value="Class II aaRS and biotin synthetases"/>
    <property type="match status" value="1"/>
</dbReference>
<dbReference type="SUPFAM" id="SSF50249">
    <property type="entry name" value="Nucleic acid-binding proteins"/>
    <property type="match status" value="1"/>
</dbReference>
<dbReference type="PROSITE" id="PS50862">
    <property type="entry name" value="AA_TRNA_LIGASE_II"/>
    <property type="match status" value="1"/>
</dbReference>
<sequence length="512" mass="58851">MSEIKEARLQKASSLVSKGFASYAQSFRVSHTTSFLIQKFDYLENGQEENFSVSLAGRVMAKRVMGKIAFFTISDQDGQIQLYLEKRIINLNLEKQKLLSFEDIKEIVDIGDWIGVYGTIKKTNKGELSIKVEKWEMLSKSLQPLPDKWHGLTDIEKRYRQRYLDLIVNPHSKNVFKTRAKCISFIRKWLDNRNFLEIETPILQSEAGGAEARPFITHHNTLDIPLYLRIATELHLKRMVVGGFEKVYELGRIFRNEGISTRHNPEFTSVEIYEAYSDYVDMMNLTEELIKDILADACGSLTINYQNKEIDFSKPWLRISMKDIVKKYTGIDFHSFNGDFLAAKKAVKNINVDFSNKVNTIGRLLNEVFEQKVESKLIEPTFVIDYPVEISPLARPHFDNKEIVQRFELFIVGRELANAFSELIDPVDQRERMQLQQSLRDKGDLEAHCIDEDFLNALEIGMPPTGGLGIGIDRLIMLITNSASIRDVIPFPLLKPEISSKKSEKLPLNEVK</sequence>
<reference key="1">
    <citation type="journal article" date="2007" name="PLoS Genet.">
        <title>Patterns and implications of gene gain and loss in the evolution of Prochlorococcus.</title>
        <authorList>
            <person name="Kettler G.C."/>
            <person name="Martiny A.C."/>
            <person name="Huang K."/>
            <person name="Zucker J."/>
            <person name="Coleman M.L."/>
            <person name="Rodrigue S."/>
            <person name="Chen F."/>
            <person name="Lapidus A."/>
            <person name="Ferriera S."/>
            <person name="Johnson J."/>
            <person name="Steglich C."/>
            <person name="Church G.M."/>
            <person name="Richardson P."/>
            <person name="Chisholm S.W."/>
        </authorList>
    </citation>
    <scope>NUCLEOTIDE SEQUENCE [LARGE SCALE GENOMIC DNA]</scope>
    <source>
        <strain>MIT 9301</strain>
    </source>
</reference>
<gene>
    <name evidence="1" type="primary">lysS</name>
    <name type="ordered locus">P9301_18101</name>
</gene>
<proteinExistence type="inferred from homology"/>